<reference key="1">
    <citation type="journal article" date="2005" name="Proc. Natl. Acad. Sci. U.S.A.">
        <title>Genome analysis of multiple pathogenic isolates of Streptococcus agalactiae: implications for the microbial 'pan-genome'.</title>
        <authorList>
            <person name="Tettelin H."/>
            <person name="Masignani V."/>
            <person name="Cieslewicz M.J."/>
            <person name="Donati C."/>
            <person name="Medini D."/>
            <person name="Ward N.L."/>
            <person name="Angiuoli S.V."/>
            <person name="Crabtree J."/>
            <person name="Jones A.L."/>
            <person name="Durkin A.S."/>
            <person name="DeBoy R.T."/>
            <person name="Davidsen T.M."/>
            <person name="Mora M."/>
            <person name="Scarselli M."/>
            <person name="Margarit y Ros I."/>
            <person name="Peterson J.D."/>
            <person name="Hauser C.R."/>
            <person name="Sundaram J.P."/>
            <person name="Nelson W.C."/>
            <person name="Madupu R."/>
            <person name="Brinkac L.M."/>
            <person name="Dodson R.J."/>
            <person name="Rosovitz M.J."/>
            <person name="Sullivan S.A."/>
            <person name="Daugherty S.C."/>
            <person name="Haft D.H."/>
            <person name="Selengut J."/>
            <person name="Gwinn M.L."/>
            <person name="Zhou L."/>
            <person name="Zafar N."/>
            <person name="Khouri H."/>
            <person name="Radune D."/>
            <person name="Dimitrov G."/>
            <person name="Watkins K."/>
            <person name="O'Connor K.J."/>
            <person name="Smith S."/>
            <person name="Utterback T.R."/>
            <person name="White O."/>
            <person name="Rubens C.E."/>
            <person name="Grandi G."/>
            <person name="Madoff L.C."/>
            <person name="Kasper D.L."/>
            <person name="Telford J.L."/>
            <person name="Wessels M.R."/>
            <person name="Rappuoli R."/>
            <person name="Fraser C.M."/>
        </authorList>
    </citation>
    <scope>NUCLEOTIDE SEQUENCE [LARGE SCALE GENOMIC DNA]</scope>
    <source>
        <strain>ATCC 27591 / A909 / CDC SS700</strain>
    </source>
</reference>
<evidence type="ECO:0000255" key="1">
    <source>
        <dbReference type="HAMAP-Rule" id="MF_00110"/>
    </source>
</evidence>
<dbReference type="EC" id="4.2.3.4" evidence="1"/>
<dbReference type="EMBL" id="CP000114">
    <property type="protein sequence ID" value="ABA46009.1"/>
    <property type="molecule type" value="Genomic_DNA"/>
</dbReference>
<dbReference type="RefSeq" id="WP_001195735.1">
    <property type="nucleotide sequence ID" value="NC_007432.1"/>
</dbReference>
<dbReference type="SMR" id="Q3K0D4"/>
<dbReference type="KEGG" id="sak:SAK_1411"/>
<dbReference type="HOGENOM" id="CLU_001201_0_1_9"/>
<dbReference type="UniPathway" id="UPA00053">
    <property type="reaction ID" value="UER00085"/>
</dbReference>
<dbReference type="GO" id="GO:0005737">
    <property type="term" value="C:cytoplasm"/>
    <property type="evidence" value="ECO:0007669"/>
    <property type="project" value="UniProtKB-SubCell"/>
</dbReference>
<dbReference type="GO" id="GO:0003856">
    <property type="term" value="F:3-dehydroquinate synthase activity"/>
    <property type="evidence" value="ECO:0007669"/>
    <property type="project" value="UniProtKB-UniRule"/>
</dbReference>
<dbReference type="GO" id="GO:0046872">
    <property type="term" value="F:metal ion binding"/>
    <property type="evidence" value="ECO:0007669"/>
    <property type="project" value="UniProtKB-KW"/>
</dbReference>
<dbReference type="GO" id="GO:0000166">
    <property type="term" value="F:nucleotide binding"/>
    <property type="evidence" value="ECO:0007669"/>
    <property type="project" value="UniProtKB-KW"/>
</dbReference>
<dbReference type="GO" id="GO:0008652">
    <property type="term" value="P:amino acid biosynthetic process"/>
    <property type="evidence" value="ECO:0007669"/>
    <property type="project" value="UniProtKB-KW"/>
</dbReference>
<dbReference type="GO" id="GO:0009073">
    <property type="term" value="P:aromatic amino acid family biosynthetic process"/>
    <property type="evidence" value="ECO:0007669"/>
    <property type="project" value="UniProtKB-KW"/>
</dbReference>
<dbReference type="GO" id="GO:0009423">
    <property type="term" value="P:chorismate biosynthetic process"/>
    <property type="evidence" value="ECO:0007669"/>
    <property type="project" value="UniProtKB-UniRule"/>
</dbReference>
<dbReference type="CDD" id="cd08195">
    <property type="entry name" value="DHQS"/>
    <property type="match status" value="1"/>
</dbReference>
<dbReference type="FunFam" id="3.40.50.1970:FF:000007">
    <property type="entry name" value="Pentafunctional AROM polypeptide"/>
    <property type="match status" value="1"/>
</dbReference>
<dbReference type="Gene3D" id="3.40.50.1970">
    <property type="match status" value="1"/>
</dbReference>
<dbReference type="Gene3D" id="1.20.1090.10">
    <property type="entry name" value="Dehydroquinate synthase-like - alpha domain"/>
    <property type="match status" value="1"/>
</dbReference>
<dbReference type="HAMAP" id="MF_00110">
    <property type="entry name" value="DHQ_synthase"/>
    <property type="match status" value="1"/>
</dbReference>
<dbReference type="InterPro" id="IPR050071">
    <property type="entry name" value="Dehydroquinate_synthase"/>
</dbReference>
<dbReference type="InterPro" id="IPR016037">
    <property type="entry name" value="DHQ_synth_AroB"/>
</dbReference>
<dbReference type="InterPro" id="IPR030963">
    <property type="entry name" value="DHQ_synth_fam"/>
</dbReference>
<dbReference type="InterPro" id="IPR030960">
    <property type="entry name" value="DHQS/DOIS_N"/>
</dbReference>
<dbReference type="InterPro" id="IPR056179">
    <property type="entry name" value="DHQS_C"/>
</dbReference>
<dbReference type="NCBIfam" id="TIGR01357">
    <property type="entry name" value="aroB"/>
    <property type="match status" value="1"/>
</dbReference>
<dbReference type="PANTHER" id="PTHR43622">
    <property type="entry name" value="3-DEHYDROQUINATE SYNTHASE"/>
    <property type="match status" value="1"/>
</dbReference>
<dbReference type="PANTHER" id="PTHR43622:SF7">
    <property type="entry name" value="3-DEHYDROQUINATE SYNTHASE, CHLOROPLASTIC"/>
    <property type="match status" value="1"/>
</dbReference>
<dbReference type="Pfam" id="PF01761">
    <property type="entry name" value="DHQ_synthase"/>
    <property type="match status" value="1"/>
</dbReference>
<dbReference type="Pfam" id="PF24621">
    <property type="entry name" value="DHQS_C"/>
    <property type="match status" value="1"/>
</dbReference>
<dbReference type="PIRSF" id="PIRSF001455">
    <property type="entry name" value="DHQ_synth"/>
    <property type="match status" value="1"/>
</dbReference>
<dbReference type="SUPFAM" id="SSF56796">
    <property type="entry name" value="Dehydroquinate synthase-like"/>
    <property type="match status" value="1"/>
</dbReference>
<organism>
    <name type="scientific">Streptococcus agalactiae serotype Ia (strain ATCC 27591 / A909 / CDC SS700)</name>
    <dbReference type="NCBI Taxonomy" id="205921"/>
    <lineage>
        <taxon>Bacteria</taxon>
        <taxon>Bacillati</taxon>
        <taxon>Bacillota</taxon>
        <taxon>Bacilli</taxon>
        <taxon>Lactobacillales</taxon>
        <taxon>Streptococcaceae</taxon>
        <taxon>Streptococcus</taxon>
    </lineage>
</organism>
<comment type="function">
    <text evidence="1">Catalyzes the conversion of 3-deoxy-D-arabino-heptulosonate 7-phosphate (DAHP) to dehydroquinate (DHQ).</text>
</comment>
<comment type="catalytic activity">
    <reaction evidence="1">
        <text>7-phospho-2-dehydro-3-deoxy-D-arabino-heptonate = 3-dehydroquinate + phosphate</text>
        <dbReference type="Rhea" id="RHEA:21968"/>
        <dbReference type="ChEBI" id="CHEBI:32364"/>
        <dbReference type="ChEBI" id="CHEBI:43474"/>
        <dbReference type="ChEBI" id="CHEBI:58394"/>
        <dbReference type="EC" id="4.2.3.4"/>
    </reaction>
</comment>
<comment type="cofactor">
    <cofactor evidence="1">
        <name>Co(2+)</name>
        <dbReference type="ChEBI" id="CHEBI:48828"/>
    </cofactor>
    <cofactor evidence="1">
        <name>Zn(2+)</name>
        <dbReference type="ChEBI" id="CHEBI:29105"/>
    </cofactor>
    <text evidence="1">Binds 1 divalent metal cation per subunit. Can use either Co(2+) or Zn(2+).</text>
</comment>
<comment type="cofactor">
    <cofactor evidence="1">
        <name>NAD(+)</name>
        <dbReference type="ChEBI" id="CHEBI:57540"/>
    </cofactor>
</comment>
<comment type="pathway">
    <text evidence="1">Metabolic intermediate biosynthesis; chorismate biosynthesis; chorismate from D-erythrose 4-phosphate and phosphoenolpyruvate: step 2/7.</text>
</comment>
<comment type="subcellular location">
    <subcellularLocation>
        <location evidence="1">Cytoplasm</location>
    </subcellularLocation>
</comment>
<comment type="similarity">
    <text evidence="1">Belongs to the sugar phosphate cyclases superfamily. Dehydroquinate synthase family.</text>
</comment>
<name>AROB_STRA1</name>
<protein>
    <recommendedName>
        <fullName evidence="1">3-dehydroquinate synthase</fullName>
        <shortName evidence="1">DHQS</shortName>
        <ecNumber evidence="1">4.2.3.4</ecNumber>
    </recommendedName>
</protein>
<keyword id="KW-0028">Amino-acid biosynthesis</keyword>
<keyword id="KW-0057">Aromatic amino acid biosynthesis</keyword>
<keyword id="KW-0170">Cobalt</keyword>
<keyword id="KW-0963">Cytoplasm</keyword>
<keyword id="KW-0456">Lyase</keyword>
<keyword id="KW-0479">Metal-binding</keyword>
<keyword id="KW-0520">NAD</keyword>
<keyword id="KW-0547">Nucleotide-binding</keyword>
<keyword id="KW-0862">Zinc</keyword>
<gene>
    <name evidence="1" type="primary">aroB</name>
    <name type="ordered locus">SAK_1411</name>
</gene>
<sequence>MQVEVDLPNHSYHIKIEEGCFSEAGDWVSHLWQKQMITIITDSNVEILYGESLVNQLKKQGFTVHVFSFAAGEASKTLEVANRIYGFLAKHHMTRSDGIIALGGGVVGDLAAFVASTYMRGIHFLQIPTSLTAQVDSSIGGKTGVNTSFAKNMVGTFAQPDGVLIDPVTLKTLGNRELVEGMGEVIKYGLIDDIKLWHILEEMDGSIDSILDNALAIIYHSCQVKRKHVLADQYDKGLRMHLNFGHTIGHAIEVHAGYGEIMHGEAVAIGMIQLSRVAERKNLMPRGISQDIYNMCLKFGLPVHYAEWDKDVLFDILSHDKKASGQFIKIVILPQLGSATVHQIPLEEMRDYLEK</sequence>
<accession>Q3K0D4</accession>
<feature type="chain" id="PRO_0000231132" description="3-dehydroquinate synthase">
    <location>
        <begin position="1"/>
        <end position="355"/>
    </location>
</feature>
<feature type="binding site" evidence="1">
    <location>
        <begin position="105"/>
        <end position="109"/>
    </location>
    <ligand>
        <name>NAD(+)</name>
        <dbReference type="ChEBI" id="CHEBI:57540"/>
    </ligand>
</feature>
<feature type="binding site" evidence="1">
    <location>
        <begin position="129"/>
        <end position="130"/>
    </location>
    <ligand>
        <name>NAD(+)</name>
        <dbReference type="ChEBI" id="CHEBI:57540"/>
    </ligand>
</feature>
<feature type="binding site" evidence="1">
    <location>
        <position position="142"/>
    </location>
    <ligand>
        <name>NAD(+)</name>
        <dbReference type="ChEBI" id="CHEBI:57540"/>
    </ligand>
</feature>
<feature type="binding site" evidence="1">
    <location>
        <position position="151"/>
    </location>
    <ligand>
        <name>NAD(+)</name>
        <dbReference type="ChEBI" id="CHEBI:57540"/>
    </ligand>
</feature>
<feature type="binding site" evidence="1">
    <location>
        <begin position="169"/>
        <end position="172"/>
    </location>
    <ligand>
        <name>NAD(+)</name>
        <dbReference type="ChEBI" id="CHEBI:57540"/>
    </ligand>
</feature>
<feature type="binding site" evidence="1">
    <location>
        <position position="184"/>
    </location>
    <ligand>
        <name>Zn(2+)</name>
        <dbReference type="ChEBI" id="CHEBI:29105"/>
    </ligand>
</feature>
<feature type="binding site" evidence="1">
    <location>
        <position position="246"/>
    </location>
    <ligand>
        <name>Zn(2+)</name>
        <dbReference type="ChEBI" id="CHEBI:29105"/>
    </ligand>
</feature>
<feature type="binding site" evidence="1">
    <location>
        <position position="263"/>
    </location>
    <ligand>
        <name>Zn(2+)</name>
        <dbReference type="ChEBI" id="CHEBI:29105"/>
    </ligand>
</feature>
<proteinExistence type="inferred from homology"/>